<dbReference type="EMBL" id="AE005674">
    <property type="protein sequence ID" value="AAN43860.1"/>
    <property type="molecule type" value="Genomic_DNA"/>
</dbReference>
<dbReference type="EMBL" id="AE014073">
    <property type="protein sequence ID" value="AAP17679.1"/>
    <property type="molecule type" value="Genomic_DNA"/>
</dbReference>
<dbReference type="RefSeq" id="NP_708153.1">
    <property type="nucleotide sequence ID" value="NC_004337.2"/>
</dbReference>
<dbReference type="RefSeq" id="WP_000574091.1">
    <property type="nucleotide sequence ID" value="NZ_WPGW01000032.1"/>
</dbReference>
<dbReference type="SMR" id="P0AEH4"/>
<dbReference type="STRING" id="198214.SF2346"/>
<dbReference type="PaxDb" id="198214-SF2346"/>
<dbReference type="GeneID" id="1026561"/>
<dbReference type="KEGG" id="sfl:SF2346"/>
<dbReference type="KEGG" id="sfx:S2480"/>
<dbReference type="PATRIC" id="fig|198214.7.peg.2810"/>
<dbReference type="HOGENOM" id="CLU_056607_3_1_6"/>
<dbReference type="Proteomes" id="UP000001006">
    <property type="component" value="Chromosome"/>
</dbReference>
<dbReference type="Proteomes" id="UP000002673">
    <property type="component" value="Chromosome"/>
</dbReference>
<dbReference type="GO" id="GO:0016747">
    <property type="term" value="F:acyltransferase activity, transferring groups other than amino-acyl groups"/>
    <property type="evidence" value="ECO:0007669"/>
    <property type="project" value="InterPro"/>
</dbReference>
<dbReference type="CDD" id="cd04301">
    <property type="entry name" value="NAT_SF"/>
    <property type="match status" value="1"/>
</dbReference>
<dbReference type="FunFam" id="3.40.630.30:FF:000035">
    <property type="entry name" value="GNAT family N-acetyltransferase"/>
    <property type="match status" value="1"/>
</dbReference>
<dbReference type="Gene3D" id="3.40.630.30">
    <property type="match status" value="1"/>
</dbReference>
<dbReference type="InterPro" id="IPR016181">
    <property type="entry name" value="Acyl_CoA_acyltransferase"/>
</dbReference>
<dbReference type="InterPro" id="IPR000182">
    <property type="entry name" value="GNAT_dom"/>
</dbReference>
<dbReference type="NCBIfam" id="NF007644">
    <property type="entry name" value="PRK10314.1"/>
    <property type="match status" value="1"/>
</dbReference>
<dbReference type="Pfam" id="PF13673">
    <property type="entry name" value="Acetyltransf_10"/>
    <property type="match status" value="1"/>
</dbReference>
<dbReference type="SUPFAM" id="SSF55729">
    <property type="entry name" value="Acyl-CoA N-acyltransferases (Nat)"/>
    <property type="match status" value="1"/>
</dbReference>
<dbReference type="PROSITE" id="PS51186">
    <property type="entry name" value="GNAT"/>
    <property type="match status" value="1"/>
</dbReference>
<proteinExistence type="inferred from homology"/>
<protein>
    <recommendedName>
        <fullName>Protein ElaA</fullName>
    </recommendedName>
</protein>
<name>ELAA_SHIFL</name>
<keyword id="KW-1185">Reference proteome</keyword>
<reference key="1">
    <citation type="journal article" date="2002" name="Nucleic Acids Res.">
        <title>Genome sequence of Shigella flexneri 2a: insights into pathogenicity through comparison with genomes of Escherichia coli K12 and O157.</title>
        <authorList>
            <person name="Jin Q."/>
            <person name="Yuan Z."/>
            <person name="Xu J."/>
            <person name="Wang Y."/>
            <person name="Shen Y."/>
            <person name="Lu W."/>
            <person name="Wang J."/>
            <person name="Liu H."/>
            <person name="Yang J."/>
            <person name="Yang F."/>
            <person name="Zhang X."/>
            <person name="Zhang J."/>
            <person name="Yang G."/>
            <person name="Wu H."/>
            <person name="Qu D."/>
            <person name="Dong J."/>
            <person name="Sun L."/>
            <person name="Xue Y."/>
            <person name="Zhao A."/>
            <person name="Gao Y."/>
            <person name="Zhu J."/>
            <person name="Kan B."/>
            <person name="Ding K."/>
            <person name="Chen S."/>
            <person name="Cheng H."/>
            <person name="Yao Z."/>
            <person name="He B."/>
            <person name="Chen R."/>
            <person name="Ma D."/>
            <person name="Qiang B."/>
            <person name="Wen Y."/>
            <person name="Hou Y."/>
            <person name="Yu J."/>
        </authorList>
    </citation>
    <scope>NUCLEOTIDE SEQUENCE [LARGE SCALE GENOMIC DNA]</scope>
    <source>
        <strain>301 / Serotype 2a</strain>
    </source>
</reference>
<reference key="2">
    <citation type="journal article" date="2003" name="Infect. Immun.">
        <title>Complete genome sequence and comparative genomics of Shigella flexneri serotype 2a strain 2457T.</title>
        <authorList>
            <person name="Wei J."/>
            <person name="Goldberg M.B."/>
            <person name="Burland V."/>
            <person name="Venkatesan M.M."/>
            <person name="Deng W."/>
            <person name="Fournier G."/>
            <person name="Mayhew G.F."/>
            <person name="Plunkett G. III"/>
            <person name="Rose D.J."/>
            <person name="Darling A."/>
            <person name="Mau B."/>
            <person name="Perna N.T."/>
            <person name="Payne S.M."/>
            <person name="Runyen-Janecky L.J."/>
            <person name="Zhou S."/>
            <person name="Schwartz D.C."/>
            <person name="Blattner F.R."/>
        </authorList>
    </citation>
    <scope>NUCLEOTIDE SEQUENCE [LARGE SCALE GENOMIC DNA]</scope>
    <source>
        <strain>ATCC 700930 / 2457T / Serotype 2a</strain>
    </source>
</reference>
<feature type="chain" id="PRO_0000201918" description="Protein ElaA">
    <location>
        <begin position="1"/>
        <end position="153"/>
    </location>
</feature>
<feature type="domain" description="N-acetyltransferase" evidence="1">
    <location>
        <begin position="7"/>
        <end position="151"/>
    </location>
</feature>
<evidence type="ECO:0000255" key="1">
    <source>
        <dbReference type="PROSITE-ProRule" id="PRU00532"/>
    </source>
</evidence>
<evidence type="ECO:0000305" key="2"/>
<comment type="similarity">
    <text evidence="2">Belongs to the UPF0039 (ElaA) family.</text>
</comment>
<organism>
    <name type="scientific">Shigella flexneri</name>
    <dbReference type="NCBI Taxonomy" id="623"/>
    <lineage>
        <taxon>Bacteria</taxon>
        <taxon>Pseudomonadati</taxon>
        <taxon>Pseudomonadota</taxon>
        <taxon>Gammaproteobacteria</taxon>
        <taxon>Enterobacterales</taxon>
        <taxon>Enterobacteriaceae</taxon>
        <taxon>Shigella</taxon>
    </lineage>
</organism>
<accession>P0AEH4</accession>
<accession>P52077</accession>
<accession>Q47011</accession>
<sequence>MIEWQDLHHSELSVSQLYALLQLRCAVFVVEQNCPYQDIDGDDLTGDNRHILGWKNDELVAYARILKSDDDLEPVVIGRVIVSEALRGEKVGQQLMSKTLETCTHHWPDKPVYLGAQAHLQNFYQSFGFIPVTEVYEEDGIPHIGMAREVIQA</sequence>
<gene>
    <name type="primary">elaA</name>
    <name type="ordered locus">SF2346</name>
    <name type="ordered locus">S2480</name>
</gene>